<reference key="1">
    <citation type="submission" date="2006-08" db="EMBL/GenBank/DDBJ databases">
        <title>Complete sequence of Shewanella frigidimarina NCIMB 400.</title>
        <authorList>
            <consortium name="US DOE Joint Genome Institute"/>
            <person name="Copeland A."/>
            <person name="Lucas S."/>
            <person name="Lapidus A."/>
            <person name="Barry K."/>
            <person name="Detter J.C."/>
            <person name="Glavina del Rio T."/>
            <person name="Hammon N."/>
            <person name="Israni S."/>
            <person name="Dalin E."/>
            <person name="Tice H."/>
            <person name="Pitluck S."/>
            <person name="Fredrickson J.K."/>
            <person name="Kolker E."/>
            <person name="McCuel L.A."/>
            <person name="DiChristina T."/>
            <person name="Nealson K.H."/>
            <person name="Newman D."/>
            <person name="Tiedje J.M."/>
            <person name="Zhou J."/>
            <person name="Romine M.F."/>
            <person name="Culley D.E."/>
            <person name="Serres M."/>
            <person name="Chertkov O."/>
            <person name="Brettin T."/>
            <person name="Bruce D."/>
            <person name="Han C."/>
            <person name="Tapia R."/>
            <person name="Gilna P."/>
            <person name="Schmutz J."/>
            <person name="Larimer F."/>
            <person name="Land M."/>
            <person name="Hauser L."/>
            <person name="Kyrpides N."/>
            <person name="Mikhailova N."/>
            <person name="Richardson P."/>
        </authorList>
    </citation>
    <scope>NUCLEOTIDE SEQUENCE [LARGE SCALE GENOMIC DNA]</scope>
    <source>
        <strain>NCIMB 400</strain>
    </source>
</reference>
<reference key="2">
    <citation type="journal article" date="2000" name="Biochem. J.">
        <title>Identification and characterization of a novel cytochrome c3 from Shewanella frigidimarina that is involved in Fe(III) respiration.</title>
        <authorList>
            <person name="Gordon E.H.J."/>
            <person name="Pike A.D."/>
            <person name="Hill A.E."/>
            <person name="Cuthbertson P.M."/>
            <person name="Chapman S.K."/>
            <person name="Reid G.A."/>
        </authorList>
    </citation>
    <scope>NUCLEOTIDE SEQUENCE [GENOMIC DNA] OF 97-291</scope>
</reference>
<gene>
    <name type="ordered locus">Sfri_1503</name>
</gene>
<proteinExistence type="inferred from homology"/>
<organism>
    <name type="scientific">Shewanella frigidimarina (strain NCIMB 400)</name>
    <dbReference type="NCBI Taxonomy" id="318167"/>
    <lineage>
        <taxon>Bacteria</taxon>
        <taxon>Pseudomonadati</taxon>
        <taxon>Pseudomonadota</taxon>
        <taxon>Gammaproteobacteria</taxon>
        <taxon>Alteromonadales</taxon>
        <taxon>Shewanellaceae</taxon>
        <taxon>Shewanella</taxon>
    </lineage>
</organism>
<name>Y1503_SHEFN</name>
<keyword id="KW-0520">NAD</keyword>
<keyword id="KW-0560">Oxidoreductase</keyword>
<keyword id="KW-1185">Reference proteome</keyword>
<protein>
    <recommendedName>
        <fullName>Uncharacterized oxidoreductase Sfri_1503</fullName>
        <ecNumber>1.1.-.-</ecNumber>
    </recommendedName>
</protein>
<sequence length="291" mass="31116">MAKVAFIGLGVMGFPMAGHLVKQGHDVTVYNRTGAKATQWVEQYGGKKADTPKDAAQGQDIVFTCVGNDDDLRQVVLGEHGIVHGMHAGAILVDHTTASADVAREIAAYIEPLNIAFLDAPVSGGQAGAENGALTVMMGGDQAHFDTVKPVISAYSRCAELLGPVGAGQLTKMVNQICIAGVVQGLAEGLHFAKSAGLDGLKVIEVISKGAAQSWQMENRYKTMWQGQYDFGFAIDWMRKDLGIALDEARRNGSHLPVAALVDQFYSEVQAMKGNRWDTSSLLARLEKSRS</sequence>
<accession>O33730</accession>
<accession>Q084G1</accession>
<dbReference type="EC" id="1.1.-.-"/>
<dbReference type="EMBL" id="CP000447">
    <property type="protein sequence ID" value="ABI71354.1"/>
    <property type="molecule type" value="Genomic_DNA"/>
</dbReference>
<dbReference type="EMBL" id="AJ000006">
    <property type="protein sequence ID" value="CAA03849.1"/>
    <property type="molecule type" value="Genomic_DNA"/>
</dbReference>
<dbReference type="RefSeq" id="WP_011636974.1">
    <property type="nucleotide sequence ID" value="NC_008345.1"/>
</dbReference>
<dbReference type="SMR" id="O33730"/>
<dbReference type="STRING" id="318167.Sfri_1503"/>
<dbReference type="KEGG" id="sfr:Sfri_1503"/>
<dbReference type="eggNOG" id="COG2084">
    <property type="taxonomic scope" value="Bacteria"/>
</dbReference>
<dbReference type="HOGENOM" id="CLU_035117_1_0_6"/>
<dbReference type="OrthoDB" id="9786703at2"/>
<dbReference type="Proteomes" id="UP000000684">
    <property type="component" value="Chromosome"/>
</dbReference>
<dbReference type="GO" id="GO:0051287">
    <property type="term" value="F:NAD binding"/>
    <property type="evidence" value="ECO:0007669"/>
    <property type="project" value="InterPro"/>
</dbReference>
<dbReference type="GO" id="GO:0050661">
    <property type="term" value="F:NADP binding"/>
    <property type="evidence" value="ECO:0007669"/>
    <property type="project" value="InterPro"/>
</dbReference>
<dbReference type="GO" id="GO:0016491">
    <property type="term" value="F:oxidoreductase activity"/>
    <property type="evidence" value="ECO:0007669"/>
    <property type="project" value="UniProtKB-KW"/>
</dbReference>
<dbReference type="GO" id="GO:0016054">
    <property type="term" value="P:organic acid catabolic process"/>
    <property type="evidence" value="ECO:0007669"/>
    <property type="project" value="UniProtKB-ARBA"/>
</dbReference>
<dbReference type="Gene3D" id="1.10.1040.10">
    <property type="entry name" value="N-(1-d-carboxylethyl)-l-norvaline Dehydrogenase, domain 2"/>
    <property type="match status" value="1"/>
</dbReference>
<dbReference type="Gene3D" id="3.40.50.720">
    <property type="entry name" value="NAD(P)-binding Rossmann-like Domain"/>
    <property type="match status" value="1"/>
</dbReference>
<dbReference type="InterPro" id="IPR002204">
    <property type="entry name" value="3-OH-isobutyrate_DH-rel_CS"/>
</dbReference>
<dbReference type="InterPro" id="IPR008927">
    <property type="entry name" value="6-PGluconate_DH-like_C_sf"/>
</dbReference>
<dbReference type="InterPro" id="IPR013328">
    <property type="entry name" value="6PGD_dom2"/>
</dbReference>
<dbReference type="InterPro" id="IPR006115">
    <property type="entry name" value="6PGDH_NADP-bd"/>
</dbReference>
<dbReference type="InterPro" id="IPR029154">
    <property type="entry name" value="HIBADH-like_NADP-bd"/>
</dbReference>
<dbReference type="InterPro" id="IPR015815">
    <property type="entry name" value="HIBADH-related"/>
</dbReference>
<dbReference type="InterPro" id="IPR036291">
    <property type="entry name" value="NAD(P)-bd_dom_sf"/>
</dbReference>
<dbReference type="PANTHER" id="PTHR43060">
    <property type="entry name" value="3-HYDROXYISOBUTYRATE DEHYDROGENASE-LIKE 1, MITOCHONDRIAL-RELATED"/>
    <property type="match status" value="1"/>
</dbReference>
<dbReference type="PANTHER" id="PTHR43060:SF15">
    <property type="entry name" value="3-HYDROXYISOBUTYRATE DEHYDROGENASE-LIKE 1, MITOCHONDRIAL-RELATED"/>
    <property type="match status" value="1"/>
</dbReference>
<dbReference type="Pfam" id="PF14833">
    <property type="entry name" value="NAD_binding_11"/>
    <property type="match status" value="1"/>
</dbReference>
<dbReference type="Pfam" id="PF03446">
    <property type="entry name" value="NAD_binding_2"/>
    <property type="match status" value="1"/>
</dbReference>
<dbReference type="PIRSF" id="PIRSF000103">
    <property type="entry name" value="HIBADH"/>
    <property type="match status" value="1"/>
</dbReference>
<dbReference type="SUPFAM" id="SSF48179">
    <property type="entry name" value="6-phosphogluconate dehydrogenase C-terminal domain-like"/>
    <property type="match status" value="1"/>
</dbReference>
<dbReference type="SUPFAM" id="SSF51735">
    <property type="entry name" value="NAD(P)-binding Rossmann-fold domains"/>
    <property type="match status" value="1"/>
</dbReference>
<dbReference type="PROSITE" id="PS00895">
    <property type="entry name" value="3_HYDROXYISOBUT_DH"/>
    <property type="match status" value="1"/>
</dbReference>
<feature type="chain" id="PRO_0000173071" description="Uncharacterized oxidoreductase Sfri_1503">
    <location>
        <begin position="1"/>
        <end position="291"/>
    </location>
</feature>
<feature type="active site" evidence="1">
    <location>
        <position position="172"/>
    </location>
</feature>
<feature type="binding site" evidence="1">
    <location>
        <begin position="5"/>
        <end position="19"/>
    </location>
    <ligand>
        <name>NAD(+)</name>
        <dbReference type="ChEBI" id="CHEBI:57540"/>
    </ligand>
</feature>
<feature type="binding site" evidence="1">
    <location>
        <position position="97"/>
    </location>
    <ligand>
        <name>NAD(+)</name>
        <dbReference type="ChEBI" id="CHEBI:57540"/>
    </ligand>
</feature>
<feature type="binding site" evidence="1">
    <location>
        <position position="240"/>
    </location>
    <ligand>
        <name>NAD(+)</name>
        <dbReference type="ChEBI" id="CHEBI:57540"/>
    </ligand>
</feature>
<feature type="sequence conflict" description="In Ref. 2; CAA03849." evidence="2" ref="2">
    <location>
        <position position="157"/>
    </location>
</feature>
<feature type="sequence conflict" description="In Ref. 2; CAA03849." evidence="2" ref="2">
    <original>A</original>
    <variation>R</variation>
    <location>
        <position position="211"/>
    </location>
</feature>
<comment type="similarity">
    <text evidence="2">Belongs to the HIBADH-related family.</text>
</comment>
<evidence type="ECO:0000250" key="1"/>
<evidence type="ECO:0000305" key="2"/>